<name>GMHA2_CAMJE</name>
<accession>Q9PMN3</accession>
<accession>Q0P8J0</accession>
<sequence length="201" mass="21653">MENLNSYIKGHFADSILVKEQILKDENLITLIKNASLEVIKAYKNGNKTLLAGNGGSAADAQHIAGEFVSRFYFDRPGIASIALTTDTSILTAIGNDYGYENLFARQVQAQGVKGDVFIGISTSGNSKNILKALEFCKQKEIISIGLSGASGGAMNELCDYCIKVPSTCTPRIQEAHILIGHIICAIVEEELFGKGFSCKQ</sequence>
<protein>
    <recommendedName>
        <fullName evidence="1">Phosphoheptose isomerase 2</fullName>
        <ecNumber evidence="1 2">5.3.1.28</ecNumber>
    </recommendedName>
    <alternativeName>
        <fullName evidence="1">Sedoheptulose 7-phosphate isomerase 2</fullName>
    </alternativeName>
</protein>
<organism>
    <name type="scientific">Campylobacter jejuni subsp. jejuni serotype O:2 (strain ATCC 700819 / NCTC 11168)</name>
    <dbReference type="NCBI Taxonomy" id="192222"/>
    <lineage>
        <taxon>Bacteria</taxon>
        <taxon>Pseudomonadati</taxon>
        <taxon>Campylobacterota</taxon>
        <taxon>Epsilonproteobacteria</taxon>
        <taxon>Campylobacterales</taxon>
        <taxon>Campylobacteraceae</taxon>
        <taxon>Campylobacter</taxon>
    </lineage>
</organism>
<comment type="function">
    <text evidence="2">Catalyzes the isomerization of sedoheptulose 7-phosphate in D-glycero-D-manno-heptose 7-phosphate. No activity with L-galacto-heptulose, L-galacto-heptulose 7-phosphate or D-manno-heptulose.</text>
</comment>
<comment type="catalytic activity">
    <reaction evidence="1 2">
        <text>2 D-sedoheptulose 7-phosphate = D-glycero-alpha-D-manno-heptose 7-phosphate + D-glycero-beta-D-manno-heptose 7-phosphate</text>
        <dbReference type="Rhea" id="RHEA:27489"/>
        <dbReference type="ChEBI" id="CHEBI:57483"/>
        <dbReference type="ChEBI" id="CHEBI:60203"/>
        <dbReference type="ChEBI" id="CHEBI:60204"/>
        <dbReference type="EC" id="5.3.1.28"/>
    </reaction>
</comment>
<comment type="cofactor">
    <cofactor evidence="1">
        <name>Zn(2+)</name>
        <dbReference type="ChEBI" id="CHEBI:29105"/>
    </cofactor>
    <text evidence="1">Binds 1 zinc ion per subunit.</text>
</comment>
<comment type="biophysicochemical properties">
    <kinetics>
        <KM evidence="2">320 uM for D-sedoheptulose 7-phosphate (at 30 degrees Celsius)</KM>
        <text evidence="2">kcat is 0.14 sec(-1) for D-sedoheptulose 7-phosphate.</text>
    </kinetics>
</comment>
<comment type="pathway">
    <text evidence="1 2">Carbohydrate biosynthesis; D-glycero-D-manno-heptose 7-phosphate biosynthesis; D-glycero-alpha-D-manno-heptose 7-phosphate and D-glycero-beta-D-manno-heptose 7-phosphate from sedoheptulose 7-phosphate: step 1/1.</text>
</comment>
<comment type="pathway">
    <text evidence="4">Capsule biogenesis; capsule polysaccharide biosynthesis.</text>
</comment>
<comment type="subunit">
    <text evidence="1">Homotetramer.</text>
</comment>
<comment type="subcellular location">
    <subcellularLocation>
        <location evidence="1">Cytoplasm</location>
    </subcellularLocation>
</comment>
<comment type="miscellaneous">
    <text evidence="1">The reaction produces a racemic mixture of D-glycero-alpha-D-manno-heptose 7-phosphate and D-glycero-beta-D-manno-heptose 7-phosphate.</text>
</comment>
<comment type="similarity">
    <text evidence="1">Belongs to the SIS family. GmhA subfamily.</text>
</comment>
<evidence type="ECO:0000255" key="1">
    <source>
        <dbReference type="HAMAP-Rule" id="MF_00067"/>
    </source>
</evidence>
<evidence type="ECO:0000269" key="2">
    <source>
    </source>
</evidence>
<evidence type="ECO:0000303" key="3">
    <source>
    </source>
</evidence>
<evidence type="ECO:0000305" key="4">
    <source>
    </source>
</evidence>
<gene>
    <name evidence="1" type="primary">gmhA2</name>
    <name type="ordered locus">Cj1424c</name>
</gene>
<dbReference type="EC" id="5.3.1.28" evidence="1 2"/>
<dbReference type="EMBL" id="AL111168">
    <property type="protein sequence ID" value="CAL35533.1"/>
    <property type="molecule type" value="Genomic_DNA"/>
</dbReference>
<dbReference type="PIR" id="H81287">
    <property type="entry name" value="H81287"/>
</dbReference>
<dbReference type="RefSeq" id="WP_002857991.1">
    <property type="nucleotide sequence ID" value="NZ_SZUC01000003.1"/>
</dbReference>
<dbReference type="RefSeq" id="YP_002344807.1">
    <property type="nucleotide sequence ID" value="NC_002163.1"/>
</dbReference>
<dbReference type="SMR" id="Q9PMN3"/>
<dbReference type="IntAct" id="Q9PMN3">
    <property type="interactions" value="2"/>
</dbReference>
<dbReference type="STRING" id="192222.Cj1424c"/>
<dbReference type="PaxDb" id="192222-Cj1424c"/>
<dbReference type="EnsemblBacteria" id="CAL35533">
    <property type="protein sequence ID" value="CAL35533"/>
    <property type="gene ID" value="Cj1424c"/>
</dbReference>
<dbReference type="GeneID" id="905713"/>
<dbReference type="KEGG" id="cje:Cj1424c"/>
<dbReference type="PATRIC" id="fig|192222.6.peg.1405"/>
<dbReference type="eggNOG" id="COG0279">
    <property type="taxonomic scope" value="Bacteria"/>
</dbReference>
<dbReference type="HOGENOM" id="CLU_080999_4_0_7"/>
<dbReference type="OrthoDB" id="9810929at2"/>
<dbReference type="BRENDA" id="5.3.1.28">
    <property type="organism ID" value="1087"/>
</dbReference>
<dbReference type="STRENDA-DB" id="8CN6CD">
    <property type="experiment" value="Characterization of Cj1424"/>
</dbReference>
<dbReference type="UniPathway" id="UPA00041">
    <property type="reaction ID" value="UER00436"/>
</dbReference>
<dbReference type="UniPathway" id="UPA00934"/>
<dbReference type="Proteomes" id="UP000000799">
    <property type="component" value="Chromosome"/>
</dbReference>
<dbReference type="GO" id="GO:0005737">
    <property type="term" value="C:cytoplasm"/>
    <property type="evidence" value="ECO:0007669"/>
    <property type="project" value="UniProtKB-SubCell"/>
</dbReference>
<dbReference type="GO" id="GO:0097367">
    <property type="term" value="F:carbohydrate derivative binding"/>
    <property type="evidence" value="ECO:0007669"/>
    <property type="project" value="InterPro"/>
</dbReference>
<dbReference type="GO" id="GO:0008968">
    <property type="term" value="F:D-sedoheptulose 7-phosphate isomerase activity"/>
    <property type="evidence" value="ECO:0000314"/>
    <property type="project" value="UniProtKB"/>
</dbReference>
<dbReference type="GO" id="GO:0008270">
    <property type="term" value="F:zinc ion binding"/>
    <property type="evidence" value="ECO:0007669"/>
    <property type="project" value="UniProtKB-UniRule"/>
</dbReference>
<dbReference type="GO" id="GO:0045227">
    <property type="term" value="P:capsule polysaccharide biosynthetic process"/>
    <property type="evidence" value="ECO:0000305"/>
    <property type="project" value="UniProtKB"/>
</dbReference>
<dbReference type="GO" id="GO:2001061">
    <property type="term" value="P:D-glycero-D-manno-heptose 7-phosphate biosynthetic process"/>
    <property type="evidence" value="ECO:0000314"/>
    <property type="project" value="UniProtKB"/>
</dbReference>
<dbReference type="CDD" id="cd05006">
    <property type="entry name" value="SIS_GmhA"/>
    <property type="match status" value="1"/>
</dbReference>
<dbReference type="Gene3D" id="3.40.50.10490">
    <property type="entry name" value="Glucose-6-phosphate isomerase like protein, domain 1"/>
    <property type="match status" value="1"/>
</dbReference>
<dbReference type="HAMAP" id="MF_00067">
    <property type="entry name" value="GmhA"/>
    <property type="match status" value="1"/>
</dbReference>
<dbReference type="InterPro" id="IPR035461">
    <property type="entry name" value="GmhA/DiaA"/>
</dbReference>
<dbReference type="InterPro" id="IPR004515">
    <property type="entry name" value="Phosphoheptose_Isoase"/>
</dbReference>
<dbReference type="InterPro" id="IPR001347">
    <property type="entry name" value="SIS_dom"/>
</dbReference>
<dbReference type="InterPro" id="IPR046348">
    <property type="entry name" value="SIS_dom_sf"/>
</dbReference>
<dbReference type="InterPro" id="IPR050099">
    <property type="entry name" value="SIS_GmhA/DiaA_subfam"/>
</dbReference>
<dbReference type="PANTHER" id="PTHR30390:SF6">
    <property type="entry name" value="DNAA INITIATOR-ASSOCIATING PROTEIN DIAA"/>
    <property type="match status" value="1"/>
</dbReference>
<dbReference type="PANTHER" id="PTHR30390">
    <property type="entry name" value="SEDOHEPTULOSE 7-PHOSPHATE ISOMERASE / DNAA INITIATOR-ASSOCIATING FACTOR FOR REPLICATION INITIATION"/>
    <property type="match status" value="1"/>
</dbReference>
<dbReference type="Pfam" id="PF13580">
    <property type="entry name" value="SIS_2"/>
    <property type="match status" value="1"/>
</dbReference>
<dbReference type="SUPFAM" id="SSF53697">
    <property type="entry name" value="SIS domain"/>
    <property type="match status" value="1"/>
</dbReference>
<dbReference type="PROSITE" id="PS51464">
    <property type="entry name" value="SIS"/>
    <property type="match status" value="1"/>
</dbReference>
<feature type="chain" id="PRO_0000136523" description="Phosphoheptose isomerase 2">
    <location>
        <begin position="1"/>
        <end position="201"/>
    </location>
</feature>
<feature type="domain" description="SIS" evidence="1">
    <location>
        <begin position="39"/>
        <end position="198"/>
    </location>
</feature>
<feature type="binding site" evidence="1">
    <location>
        <begin position="54"/>
        <end position="56"/>
    </location>
    <ligand>
        <name>substrate</name>
    </ligand>
</feature>
<feature type="binding site" evidence="1">
    <location>
        <position position="63"/>
    </location>
    <ligand>
        <name>Zn(2+)</name>
        <dbReference type="ChEBI" id="CHEBI:29105"/>
    </ligand>
</feature>
<feature type="binding site" evidence="1">
    <location>
        <position position="67"/>
    </location>
    <ligand>
        <name>substrate</name>
    </ligand>
</feature>
<feature type="binding site" evidence="1">
    <location>
        <position position="67"/>
    </location>
    <ligand>
        <name>Zn(2+)</name>
        <dbReference type="ChEBI" id="CHEBI:29105"/>
    </ligand>
</feature>
<feature type="binding site" evidence="1">
    <location>
        <begin position="96"/>
        <end position="97"/>
    </location>
    <ligand>
        <name>substrate</name>
    </ligand>
</feature>
<feature type="binding site" evidence="1">
    <location>
        <begin position="122"/>
        <end position="124"/>
    </location>
    <ligand>
        <name>substrate</name>
    </ligand>
</feature>
<feature type="binding site" evidence="1">
    <location>
        <position position="127"/>
    </location>
    <ligand>
        <name>substrate</name>
    </ligand>
</feature>
<feature type="binding site" evidence="1">
    <location>
        <position position="174"/>
    </location>
    <ligand>
        <name>substrate</name>
    </ligand>
</feature>
<feature type="binding site" evidence="1">
    <location>
        <position position="174"/>
    </location>
    <ligand>
        <name>Zn(2+)</name>
        <dbReference type="ChEBI" id="CHEBI:29105"/>
    </ligand>
</feature>
<feature type="binding site" evidence="1">
    <location>
        <position position="182"/>
    </location>
    <ligand>
        <name>Zn(2+)</name>
        <dbReference type="ChEBI" id="CHEBI:29105"/>
    </ligand>
</feature>
<reference key="1">
    <citation type="journal article" date="2000" name="Nature">
        <title>The genome sequence of the food-borne pathogen Campylobacter jejuni reveals hypervariable sequences.</title>
        <authorList>
            <person name="Parkhill J."/>
            <person name="Wren B.W."/>
            <person name="Mungall K.L."/>
            <person name="Ketley J.M."/>
            <person name="Churcher C.M."/>
            <person name="Basham D."/>
            <person name="Chillingworth T."/>
            <person name="Davies R.M."/>
            <person name="Feltwell T."/>
            <person name="Holroyd S."/>
            <person name="Jagels K."/>
            <person name="Karlyshev A.V."/>
            <person name="Moule S."/>
            <person name="Pallen M.J."/>
            <person name="Penn C.W."/>
            <person name="Quail M.A."/>
            <person name="Rajandream M.A."/>
            <person name="Rutherford K.M."/>
            <person name="van Vliet A.H.M."/>
            <person name="Whitehead S."/>
            <person name="Barrell B.G."/>
        </authorList>
    </citation>
    <scope>NUCLEOTIDE SEQUENCE [LARGE SCALE GENOMIC DNA]</scope>
    <source>
        <strain>ATCC 700819 / NCTC 11168</strain>
    </source>
</reference>
<reference key="2">
    <citation type="journal article" date="2002" name="Microbiology">
        <title>Novel pathways for biosynthesis of nucleotide-activated glycero-manno-heptose precursors of bacterial glycoproteins and cell surface polysaccharides.</title>
        <authorList>
            <person name="Valvano M.A."/>
            <person name="Messner P."/>
            <person name="Kosma P."/>
        </authorList>
    </citation>
    <scope>BIOSYNTHESIS OF NUCLEOTIDE-ACTIVATED GLYCERO-MANNO-HEPTOSE</scope>
</reference>
<reference key="3">
    <citation type="journal article" date="2000" name="Mol. Microbiol.">
        <title>Genetic and biochemical evidence of a Campylobacter jejuni capsular polysaccharide that accounts for Penner serotype specificity.</title>
        <authorList>
            <person name="Karlyshev A.V."/>
            <person name="Linton D."/>
            <person name="Gregson N.A."/>
            <person name="Lastovica A.J."/>
            <person name="Wren B.W."/>
        </authorList>
    </citation>
    <scope>CAPSULAR POLYSACCHARIDE</scope>
</reference>
<reference key="4">
    <citation type="journal article" date="2019" name="Biochemistry">
        <title>Biosynthesis of GDP-d-glycero-alpha-d-manno-heptose for the Capsular Polysaccharide of Campylobacter jejuni.</title>
        <authorList>
            <person name="Huddleston J.P."/>
            <person name="Raushel F.M."/>
        </authorList>
    </citation>
    <scope>FUNCTION</scope>
    <scope>CATALYTIC ACTIVITY</scope>
    <scope>BIOPHYSICOCHEMICAL PROPERTIES</scope>
    <scope>PATHWAY</scope>
    <source>
        <strain evidence="3">ATCC 700819 / NCTC 11168</strain>
    </source>
</reference>
<keyword id="KW-0972">Capsule biogenesis/degradation</keyword>
<keyword id="KW-0119">Carbohydrate metabolism</keyword>
<keyword id="KW-0963">Cytoplasm</keyword>
<keyword id="KW-0413">Isomerase</keyword>
<keyword id="KW-0479">Metal-binding</keyword>
<keyword id="KW-1185">Reference proteome</keyword>
<keyword id="KW-0862">Zinc</keyword>
<proteinExistence type="evidence at protein level"/>